<sequence>MACIENVLGGHAPSPLVVSVDKNGNQELHHDMPLQCLSSKPEDDAEPWGQPQVPLRPSVNVLTDLDSKQLEWPSERTGSCIPLHSLRAHRHPYGPPPAVAEESLATAEVNSSDALAGWRQEGQDAINVSWEVSGGPPALIVGGTKVNNGGTERGSNNARLHVALPQGKGFFPPRGPQVRGPSHIPTLRSGIVMEVPPGNTRIACRGKLAHVSFPLRGPCHPMHNWPRPIPLSSSTPGLPSCSTVHCFIPPRPPIFNPFLTMPLPFAPPPIFGPPLPSYFAHFHSGGMPAPASPNREHS</sequence>
<accession>B1ATL7</accession>
<protein>
    <recommendedName>
        <fullName>Proline-rich protein 32</fullName>
    </recommendedName>
</protein>
<dbReference type="EMBL" id="AL662896">
    <property type="status" value="NOT_ANNOTATED_CDS"/>
    <property type="molecule type" value="Genomic_DNA"/>
</dbReference>
<dbReference type="CCDS" id="CCDS48163.1"/>
<dbReference type="RefSeq" id="NP_001116188.1">
    <property type="nucleotide sequence ID" value="NM_001122716.2"/>
</dbReference>
<dbReference type="BioGRID" id="934805">
    <property type="interactions" value="5"/>
</dbReference>
<dbReference type="IntAct" id="B1ATL7">
    <property type="interactions" value="4"/>
</dbReference>
<dbReference type="STRING" id="9606.ENSP00000360166"/>
<dbReference type="iPTMnet" id="B1ATL7"/>
<dbReference type="PhosphoSitePlus" id="B1ATL7"/>
<dbReference type="BioMuta" id="PRR32"/>
<dbReference type="jPOST" id="B1ATL7"/>
<dbReference type="MassIVE" id="B1ATL7"/>
<dbReference type="PaxDb" id="9606-ENSP00000360166"/>
<dbReference type="Antibodypedia" id="57821">
    <property type="antibodies" value="4 antibodies from 4 providers"/>
</dbReference>
<dbReference type="DNASU" id="100130613"/>
<dbReference type="Ensembl" id="ENST00000371125.4">
    <property type="protein sequence ID" value="ENSP00000360166.3"/>
    <property type="gene ID" value="ENSG00000183631.5"/>
</dbReference>
<dbReference type="GeneID" id="100130613"/>
<dbReference type="KEGG" id="hsa:100130613"/>
<dbReference type="MANE-Select" id="ENST00000371125.4">
    <property type="protein sequence ID" value="ENSP00000360166.3"/>
    <property type="RefSeq nucleotide sequence ID" value="NM_001122716.2"/>
    <property type="RefSeq protein sequence ID" value="NP_001116188.1"/>
</dbReference>
<dbReference type="UCSC" id="uc010nra.4">
    <property type="organism name" value="human"/>
</dbReference>
<dbReference type="AGR" id="HGNC:34498"/>
<dbReference type="CTD" id="100130613"/>
<dbReference type="GeneCards" id="PRR32"/>
<dbReference type="HGNC" id="HGNC:34498">
    <property type="gene designation" value="PRR32"/>
</dbReference>
<dbReference type="HPA" id="ENSG00000183631">
    <property type="expression patterns" value="Tissue enriched (tongue)"/>
</dbReference>
<dbReference type="neXtProt" id="NX_B1ATL7"/>
<dbReference type="OpenTargets" id="ENSG00000183631"/>
<dbReference type="PharmGKB" id="PA162383082"/>
<dbReference type="VEuPathDB" id="HostDB:ENSG00000183631"/>
<dbReference type="eggNOG" id="ENOG502T9EE">
    <property type="taxonomic scope" value="Eukaryota"/>
</dbReference>
<dbReference type="GeneTree" id="ENSGT00390000012726"/>
<dbReference type="HOGENOM" id="CLU_933713_0_0_1"/>
<dbReference type="InParanoid" id="B1ATL7"/>
<dbReference type="OMA" id="HCFIPPR"/>
<dbReference type="OrthoDB" id="9802133at2759"/>
<dbReference type="PAN-GO" id="B1ATL7">
    <property type="GO annotations" value="0 GO annotations based on evolutionary models"/>
</dbReference>
<dbReference type="PhylomeDB" id="B1ATL7"/>
<dbReference type="TreeFam" id="TF338131"/>
<dbReference type="PathwayCommons" id="B1ATL7"/>
<dbReference type="SignaLink" id="B1ATL7"/>
<dbReference type="BioGRID-ORCS" id="100130613">
    <property type="hits" value="12 hits in 756 CRISPR screens"/>
</dbReference>
<dbReference type="GenomeRNAi" id="100130613"/>
<dbReference type="Pharos" id="B1ATL7">
    <property type="development level" value="Tdark"/>
</dbReference>
<dbReference type="PRO" id="PR:B1ATL7"/>
<dbReference type="Proteomes" id="UP000005640">
    <property type="component" value="Chromosome X"/>
</dbReference>
<dbReference type="RNAct" id="B1ATL7">
    <property type="molecule type" value="protein"/>
</dbReference>
<dbReference type="Bgee" id="ENSG00000183631">
    <property type="expression patterns" value="Expressed in right cardiac atrium and 40 other cell types or tissues"/>
</dbReference>
<dbReference type="InterPro" id="IPR027891">
    <property type="entry name" value="DUF4645"/>
</dbReference>
<dbReference type="PANTHER" id="PTHR37343">
    <property type="entry name" value="PROLINE-RICH PROTEIN 32"/>
    <property type="match status" value="1"/>
</dbReference>
<dbReference type="PANTHER" id="PTHR37343:SF1">
    <property type="entry name" value="PROLINE-RICH PROTEIN 32"/>
    <property type="match status" value="1"/>
</dbReference>
<dbReference type="Pfam" id="PF15488">
    <property type="entry name" value="DUF4645"/>
    <property type="match status" value="1"/>
</dbReference>
<organism>
    <name type="scientific">Homo sapiens</name>
    <name type="common">Human</name>
    <dbReference type="NCBI Taxonomy" id="9606"/>
    <lineage>
        <taxon>Eukaryota</taxon>
        <taxon>Metazoa</taxon>
        <taxon>Chordata</taxon>
        <taxon>Craniata</taxon>
        <taxon>Vertebrata</taxon>
        <taxon>Euteleostomi</taxon>
        <taxon>Mammalia</taxon>
        <taxon>Eutheria</taxon>
        <taxon>Euarchontoglires</taxon>
        <taxon>Primates</taxon>
        <taxon>Haplorrhini</taxon>
        <taxon>Catarrhini</taxon>
        <taxon>Hominidae</taxon>
        <taxon>Homo</taxon>
    </lineage>
</organism>
<gene>
    <name type="primary">PRR32</name>
    <name type="synonym">CXorf64</name>
</gene>
<reference key="1">
    <citation type="journal article" date="2005" name="Nature">
        <title>The DNA sequence of the human X chromosome.</title>
        <authorList>
            <person name="Ross M.T."/>
            <person name="Grafham D.V."/>
            <person name="Coffey A.J."/>
            <person name="Scherer S."/>
            <person name="McLay K."/>
            <person name="Muzny D."/>
            <person name="Platzer M."/>
            <person name="Howell G.R."/>
            <person name="Burrows C."/>
            <person name="Bird C.P."/>
            <person name="Frankish A."/>
            <person name="Lovell F.L."/>
            <person name="Howe K.L."/>
            <person name="Ashurst J.L."/>
            <person name="Fulton R.S."/>
            <person name="Sudbrak R."/>
            <person name="Wen G."/>
            <person name="Jones M.C."/>
            <person name="Hurles M.E."/>
            <person name="Andrews T.D."/>
            <person name="Scott C.E."/>
            <person name="Searle S."/>
            <person name="Ramser J."/>
            <person name="Whittaker A."/>
            <person name="Deadman R."/>
            <person name="Carter N.P."/>
            <person name="Hunt S.E."/>
            <person name="Chen R."/>
            <person name="Cree A."/>
            <person name="Gunaratne P."/>
            <person name="Havlak P."/>
            <person name="Hodgson A."/>
            <person name="Metzker M.L."/>
            <person name="Richards S."/>
            <person name="Scott G."/>
            <person name="Steffen D."/>
            <person name="Sodergren E."/>
            <person name="Wheeler D.A."/>
            <person name="Worley K.C."/>
            <person name="Ainscough R."/>
            <person name="Ambrose K.D."/>
            <person name="Ansari-Lari M.A."/>
            <person name="Aradhya S."/>
            <person name="Ashwell R.I."/>
            <person name="Babbage A.K."/>
            <person name="Bagguley C.L."/>
            <person name="Ballabio A."/>
            <person name="Banerjee R."/>
            <person name="Barker G.E."/>
            <person name="Barlow K.F."/>
            <person name="Barrett I.P."/>
            <person name="Bates K.N."/>
            <person name="Beare D.M."/>
            <person name="Beasley H."/>
            <person name="Beasley O."/>
            <person name="Beck A."/>
            <person name="Bethel G."/>
            <person name="Blechschmidt K."/>
            <person name="Brady N."/>
            <person name="Bray-Allen S."/>
            <person name="Bridgeman A.M."/>
            <person name="Brown A.J."/>
            <person name="Brown M.J."/>
            <person name="Bonnin D."/>
            <person name="Bruford E.A."/>
            <person name="Buhay C."/>
            <person name="Burch P."/>
            <person name="Burford D."/>
            <person name="Burgess J."/>
            <person name="Burrill W."/>
            <person name="Burton J."/>
            <person name="Bye J.M."/>
            <person name="Carder C."/>
            <person name="Carrel L."/>
            <person name="Chako J."/>
            <person name="Chapman J.C."/>
            <person name="Chavez D."/>
            <person name="Chen E."/>
            <person name="Chen G."/>
            <person name="Chen Y."/>
            <person name="Chen Z."/>
            <person name="Chinault C."/>
            <person name="Ciccodicola A."/>
            <person name="Clark S.Y."/>
            <person name="Clarke G."/>
            <person name="Clee C.M."/>
            <person name="Clegg S."/>
            <person name="Clerc-Blankenburg K."/>
            <person name="Clifford K."/>
            <person name="Cobley V."/>
            <person name="Cole C.G."/>
            <person name="Conquer J.S."/>
            <person name="Corby N."/>
            <person name="Connor R.E."/>
            <person name="David R."/>
            <person name="Davies J."/>
            <person name="Davis C."/>
            <person name="Davis J."/>
            <person name="Delgado O."/>
            <person name="Deshazo D."/>
            <person name="Dhami P."/>
            <person name="Ding Y."/>
            <person name="Dinh H."/>
            <person name="Dodsworth S."/>
            <person name="Draper H."/>
            <person name="Dugan-Rocha S."/>
            <person name="Dunham A."/>
            <person name="Dunn M."/>
            <person name="Durbin K.J."/>
            <person name="Dutta I."/>
            <person name="Eades T."/>
            <person name="Ellwood M."/>
            <person name="Emery-Cohen A."/>
            <person name="Errington H."/>
            <person name="Evans K.L."/>
            <person name="Faulkner L."/>
            <person name="Francis F."/>
            <person name="Frankland J."/>
            <person name="Fraser A.E."/>
            <person name="Galgoczy P."/>
            <person name="Gilbert J."/>
            <person name="Gill R."/>
            <person name="Gloeckner G."/>
            <person name="Gregory S.G."/>
            <person name="Gribble S."/>
            <person name="Griffiths C."/>
            <person name="Grocock R."/>
            <person name="Gu Y."/>
            <person name="Gwilliam R."/>
            <person name="Hamilton C."/>
            <person name="Hart E.A."/>
            <person name="Hawes A."/>
            <person name="Heath P.D."/>
            <person name="Heitmann K."/>
            <person name="Hennig S."/>
            <person name="Hernandez J."/>
            <person name="Hinzmann B."/>
            <person name="Ho S."/>
            <person name="Hoffs M."/>
            <person name="Howden P.J."/>
            <person name="Huckle E.J."/>
            <person name="Hume J."/>
            <person name="Hunt P.J."/>
            <person name="Hunt A.R."/>
            <person name="Isherwood J."/>
            <person name="Jacob L."/>
            <person name="Johnson D."/>
            <person name="Jones S."/>
            <person name="de Jong P.J."/>
            <person name="Joseph S.S."/>
            <person name="Keenan S."/>
            <person name="Kelly S."/>
            <person name="Kershaw J.K."/>
            <person name="Khan Z."/>
            <person name="Kioschis P."/>
            <person name="Klages S."/>
            <person name="Knights A.J."/>
            <person name="Kosiura A."/>
            <person name="Kovar-Smith C."/>
            <person name="Laird G.K."/>
            <person name="Langford C."/>
            <person name="Lawlor S."/>
            <person name="Leversha M."/>
            <person name="Lewis L."/>
            <person name="Liu W."/>
            <person name="Lloyd C."/>
            <person name="Lloyd D.M."/>
            <person name="Loulseged H."/>
            <person name="Loveland J.E."/>
            <person name="Lovell J.D."/>
            <person name="Lozado R."/>
            <person name="Lu J."/>
            <person name="Lyne R."/>
            <person name="Ma J."/>
            <person name="Maheshwari M."/>
            <person name="Matthews L.H."/>
            <person name="McDowall J."/>
            <person name="McLaren S."/>
            <person name="McMurray A."/>
            <person name="Meidl P."/>
            <person name="Meitinger T."/>
            <person name="Milne S."/>
            <person name="Miner G."/>
            <person name="Mistry S.L."/>
            <person name="Morgan M."/>
            <person name="Morris S."/>
            <person name="Mueller I."/>
            <person name="Mullikin J.C."/>
            <person name="Nguyen N."/>
            <person name="Nordsiek G."/>
            <person name="Nyakatura G."/>
            <person name="O'dell C.N."/>
            <person name="Okwuonu G."/>
            <person name="Palmer S."/>
            <person name="Pandian R."/>
            <person name="Parker D."/>
            <person name="Parrish J."/>
            <person name="Pasternak S."/>
            <person name="Patel D."/>
            <person name="Pearce A.V."/>
            <person name="Pearson D.M."/>
            <person name="Pelan S.E."/>
            <person name="Perez L."/>
            <person name="Porter K.M."/>
            <person name="Ramsey Y."/>
            <person name="Reichwald K."/>
            <person name="Rhodes S."/>
            <person name="Ridler K.A."/>
            <person name="Schlessinger D."/>
            <person name="Schueler M.G."/>
            <person name="Sehra H.K."/>
            <person name="Shaw-Smith C."/>
            <person name="Shen H."/>
            <person name="Sheridan E.M."/>
            <person name="Shownkeen R."/>
            <person name="Skuce C.D."/>
            <person name="Smith M.L."/>
            <person name="Sotheran E.C."/>
            <person name="Steingruber H.E."/>
            <person name="Steward C.A."/>
            <person name="Storey R."/>
            <person name="Swann R.M."/>
            <person name="Swarbreck D."/>
            <person name="Tabor P.E."/>
            <person name="Taudien S."/>
            <person name="Taylor T."/>
            <person name="Teague B."/>
            <person name="Thomas K."/>
            <person name="Thorpe A."/>
            <person name="Timms K."/>
            <person name="Tracey A."/>
            <person name="Trevanion S."/>
            <person name="Tromans A.C."/>
            <person name="d'Urso M."/>
            <person name="Verduzco D."/>
            <person name="Villasana D."/>
            <person name="Waldron L."/>
            <person name="Wall M."/>
            <person name="Wang Q."/>
            <person name="Warren J."/>
            <person name="Warry G.L."/>
            <person name="Wei X."/>
            <person name="West A."/>
            <person name="Whitehead S.L."/>
            <person name="Whiteley M.N."/>
            <person name="Wilkinson J.E."/>
            <person name="Willey D.L."/>
            <person name="Williams G."/>
            <person name="Williams L."/>
            <person name="Williamson A."/>
            <person name="Williamson H."/>
            <person name="Wilming L."/>
            <person name="Woodmansey R.L."/>
            <person name="Wray P.W."/>
            <person name="Yen J."/>
            <person name="Zhang J."/>
            <person name="Zhou J."/>
            <person name="Zoghbi H."/>
            <person name="Zorilla S."/>
            <person name="Buck D."/>
            <person name="Reinhardt R."/>
            <person name="Poustka A."/>
            <person name="Rosenthal A."/>
            <person name="Lehrach H."/>
            <person name="Meindl A."/>
            <person name="Minx P.J."/>
            <person name="Hillier L.W."/>
            <person name="Willard H.F."/>
            <person name="Wilson R.K."/>
            <person name="Waterston R.H."/>
            <person name="Rice C.M."/>
            <person name="Vaudin M."/>
            <person name="Coulson A."/>
            <person name="Nelson D.L."/>
            <person name="Weinstock G."/>
            <person name="Sulston J.E."/>
            <person name="Durbin R.M."/>
            <person name="Hubbard T."/>
            <person name="Gibbs R.A."/>
            <person name="Beck S."/>
            <person name="Rogers J."/>
            <person name="Bentley D.R."/>
        </authorList>
    </citation>
    <scope>NUCLEOTIDE SEQUENCE [LARGE SCALE GENOMIC DNA]</scope>
</reference>
<evidence type="ECO:0000256" key="1">
    <source>
        <dbReference type="SAM" id="MobiDB-lite"/>
    </source>
</evidence>
<feature type="chain" id="PRO_0000336102" description="Proline-rich protein 32">
    <location>
        <begin position="1"/>
        <end position="298"/>
    </location>
</feature>
<feature type="region of interest" description="Disordered" evidence="1">
    <location>
        <begin position="36"/>
        <end position="56"/>
    </location>
</feature>
<feature type="sequence variant" id="VAR_061638" description="In dbSNP:rs12835991.">
    <original>L</original>
    <variation>V</variation>
    <location>
        <position position="115"/>
    </location>
</feature>
<feature type="sequence variant" id="VAR_059650" description="In dbSNP:rs4289953.">
    <original>M</original>
    <variation>T</variation>
    <location>
        <position position="193"/>
    </location>
</feature>
<comment type="interaction">
    <interactant intactId="EBI-18587059">
        <id>B1ATL7</id>
    </interactant>
    <interactant intactId="EBI-740376">
        <id>Q86UW9</id>
        <label>DTX2</label>
    </interactant>
    <organismsDiffer>false</organismsDiffer>
    <experiments>3</experiments>
</comment>
<comment type="interaction">
    <interactant intactId="EBI-18587059">
        <id>B1ATL7</id>
    </interactant>
    <interactant intactId="EBI-743414">
        <id>O95967</id>
        <label>EFEMP2</label>
    </interactant>
    <organismsDiffer>false</organismsDiffer>
    <experiments>3</experiments>
</comment>
<comment type="interaction">
    <interactant intactId="EBI-18587059">
        <id>B1ATL7</id>
    </interactant>
    <interactant intactId="EBI-352986">
        <id>P52597</id>
        <label>HNRNPF</label>
    </interactant>
    <organismsDiffer>false</organismsDiffer>
    <experiments>3</experiments>
</comment>
<comment type="interaction">
    <interactant intactId="EBI-18587059">
        <id>B1ATL7</id>
    </interactant>
    <interactant intactId="EBI-1051237">
        <id>Q9BYJ9</id>
        <label>YTHDF1</label>
    </interactant>
    <organismsDiffer>false</organismsDiffer>
    <experiments>3</experiments>
</comment>
<keyword id="KW-1185">Reference proteome</keyword>
<proteinExistence type="evidence at protein level"/>
<name>PRR32_HUMAN</name>